<keyword id="KW-0378">Hydrolase</keyword>
<keyword id="KW-0574">Periplasm</keyword>
<keyword id="KW-0673">Quorum sensing</keyword>
<keyword id="KW-0732">Signal</keyword>
<keyword id="KW-0865">Zymogen</keyword>
<gene>
    <name type="primary">pvdQ</name>
    <name type="ordered locus">PSPPH_1937</name>
</gene>
<dbReference type="EC" id="3.5.1.97"/>
<dbReference type="EMBL" id="CP000058">
    <property type="protein sequence ID" value="AAZ35979.1"/>
    <property type="molecule type" value="Genomic_DNA"/>
</dbReference>
<dbReference type="RefSeq" id="WP_011168299.1">
    <property type="nucleotide sequence ID" value="NC_005773.3"/>
</dbReference>
<dbReference type="SMR" id="Q48KB0"/>
<dbReference type="MEROPS" id="S45.004"/>
<dbReference type="KEGG" id="psp:PSPPH_1937"/>
<dbReference type="eggNOG" id="COG2366">
    <property type="taxonomic scope" value="Bacteria"/>
</dbReference>
<dbReference type="HOGENOM" id="CLU_017615_0_0_6"/>
<dbReference type="Proteomes" id="UP000000551">
    <property type="component" value="Chromosome"/>
</dbReference>
<dbReference type="GO" id="GO:0042597">
    <property type="term" value="C:periplasmic space"/>
    <property type="evidence" value="ECO:0007669"/>
    <property type="project" value="UniProtKB-SubCell"/>
</dbReference>
<dbReference type="GO" id="GO:0016811">
    <property type="term" value="F:hydrolase activity, acting on carbon-nitrogen (but not peptide) bonds, in linear amides"/>
    <property type="evidence" value="ECO:0007669"/>
    <property type="project" value="InterPro"/>
</dbReference>
<dbReference type="GO" id="GO:0017000">
    <property type="term" value="P:antibiotic biosynthetic process"/>
    <property type="evidence" value="ECO:0007669"/>
    <property type="project" value="InterPro"/>
</dbReference>
<dbReference type="GO" id="GO:0009372">
    <property type="term" value="P:quorum sensing"/>
    <property type="evidence" value="ECO:0007669"/>
    <property type="project" value="UniProtKB-KW"/>
</dbReference>
<dbReference type="CDD" id="cd01936">
    <property type="entry name" value="Ntn_CA"/>
    <property type="match status" value="1"/>
</dbReference>
<dbReference type="Gene3D" id="1.10.1400.10">
    <property type="match status" value="1"/>
</dbReference>
<dbReference type="Gene3D" id="2.30.120.10">
    <property type="match status" value="1"/>
</dbReference>
<dbReference type="Gene3D" id="3.60.20.10">
    <property type="entry name" value="Glutamine Phosphoribosylpyrophosphate, subunit 1, domain 1"/>
    <property type="match status" value="1"/>
</dbReference>
<dbReference type="Gene3D" id="1.10.439.10">
    <property type="entry name" value="Penicillin Amidohydrolase, domain 1"/>
    <property type="match status" value="1"/>
</dbReference>
<dbReference type="InterPro" id="IPR029055">
    <property type="entry name" value="Ntn_hydrolases_N"/>
</dbReference>
<dbReference type="InterPro" id="IPR043147">
    <property type="entry name" value="Penicillin_amidase_A-knob"/>
</dbReference>
<dbReference type="InterPro" id="IPR023343">
    <property type="entry name" value="Penicillin_amidase_dom1"/>
</dbReference>
<dbReference type="InterPro" id="IPR043146">
    <property type="entry name" value="Penicillin_amidase_N_B-knob"/>
</dbReference>
<dbReference type="InterPro" id="IPR002692">
    <property type="entry name" value="S45"/>
</dbReference>
<dbReference type="PANTHER" id="PTHR34218:SF3">
    <property type="entry name" value="ACYL-HOMOSERINE LACTONE ACYLASE PVDQ"/>
    <property type="match status" value="1"/>
</dbReference>
<dbReference type="PANTHER" id="PTHR34218">
    <property type="entry name" value="PEPTIDASE S45 PENICILLIN AMIDASE"/>
    <property type="match status" value="1"/>
</dbReference>
<dbReference type="Pfam" id="PF01804">
    <property type="entry name" value="Penicil_amidase"/>
    <property type="match status" value="1"/>
</dbReference>
<dbReference type="SUPFAM" id="SSF56235">
    <property type="entry name" value="N-terminal nucleophile aminohydrolases (Ntn hydrolases)"/>
    <property type="match status" value="1"/>
</dbReference>
<proteinExistence type="inferred from homology"/>
<feature type="signal peptide" evidence="2">
    <location>
        <begin position="1"/>
        <end position="25"/>
    </location>
</feature>
<feature type="chain" id="PRO_0000253369" description="Acyl-homoserine lactone acylase PvdQ">
    <location>
        <begin position="26"/>
        <end position="779"/>
    </location>
</feature>
<feature type="chain" id="PRO_0000253370" description="Acyl-homoserine lactone acylase PvdQ subunit alpha">
    <location>
        <begin position="26"/>
        <end position="201" status="uncertain"/>
    </location>
</feature>
<feature type="propeptide" id="PRO_0000253371" description="Spacer peptide" evidence="1">
    <location>
        <begin position="202" status="uncertain"/>
        <end position="223"/>
    </location>
</feature>
<feature type="chain" id="PRO_0000253372" description="Acyl-homoserine lactone acylase PvdQ subunit beta">
    <location>
        <begin position="224"/>
        <end position="779"/>
    </location>
</feature>
<feature type="region of interest" description="Disordered" evidence="3">
    <location>
        <begin position="731"/>
        <end position="752"/>
    </location>
</feature>
<feature type="compositionally biased region" description="Polar residues" evidence="3">
    <location>
        <begin position="731"/>
        <end position="746"/>
    </location>
</feature>
<feature type="active site" description="Nucleophile" evidence="1">
    <location>
        <position position="224"/>
    </location>
</feature>
<comment type="function">
    <text evidence="1">Catalyzes the deacylation of acyl-homoserine lactone (AHL or acyl-HSL), releasing homoserine lactone (HSL) and the corresponding fatty acid. Possesses a specificity for the degradation of long-chain acyl-HSLs (side chains of 11 to 14 carbons in length) (By similarity).</text>
</comment>
<comment type="catalytic activity">
    <reaction>
        <text>an N-acyl-L-homoserine lactone + H2O = L-homoserine lactone + a carboxylate</text>
        <dbReference type="Rhea" id="RHEA:18937"/>
        <dbReference type="ChEBI" id="CHEBI:15377"/>
        <dbReference type="ChEBI" id="CHEBI:29067"/>
        <dbReference type="ChEBI" id="CHEBI:55474"/>
        <dbReference type="ChEBI" id="CHEBI:58633"/>
        <dbReference type="EC" id="3.5.1.97"/>
    </reaction>
</comment>
<comment type="subunit">
    <text evidence="1">Heterodimer of an alpha subunit and a beta subunit processed from the same precursor.</text>
</comment>
<comment type="subcellular location">
    <subcellularLocation>
        <location evidence="1">Periplasm</location>
    </subcellularLocation>
</comment>
<comment type="miscellaneous">
    <text>AHL-mediated signaling mediates quorum sensing in many species of Proteobacteria, regulating hundreds of genes, including many that code for extracellular virulence factors.</text>
</comment>
<comment type="similarity">
    <text evidence="4">Belongs to the peptidase S45 family.</text>
</comment>
<organism>
    <name type="scientific">Pseudomonas savastanoi pv. phaseolicola (strain 1448A / Race 6)</name>
    <name type="common">Pseudomonas syringae pv. phaseolicola (strain 1448A / Race 6)</name>
    <dbReference type="NCBI Taxonomy" id="264730"/>
    <lineage>
        <taxon>Bacteria</taxon>
        <taxon>Pseudomonadati</taxon>
        <taxon>Pseudomonadota</taxon>
        <taxon>Gammaproteobacteria</taxon>
        <taxon>Pseudomonadales</taxon>
        <taxon>Pseudomonadaceae</taxon>
        <taxon>Pseudomonas</taxon>
    </lineage>
</organism>
<reference key="1">
    <citation type="journal article" date="2005" name="J. Bacteriol.">
        <title>Whole-genome sequence analysis of Pseudomonas syringae pv. phaseolicola 1448A reveals divergence among pathovars in genes involved in virulence and transposition.</title>
        <authorList>
            <person name="Joardar V."/>
            <person name="Lindeberg M."/>
            <person name="Jackson R.W."/>
            <person name="Selengut J."/>
            <person name="Dodson R."/>
            <person name="Brinkac L.M."/>
            <person name="Daugherty S.C."/>
            <person name="DeBoy R.T."/>
            <person name="Durkin A.S."/>
            <person name="Gwinn Giglio M."/>
            <person name="Madupu R."/>
            <person name="Nelson W.C."/>
            <person name="Rosovitz M.J."/>
            <person name="Sullivan S.A."/>
            <person name="Crabtree J."/>
            <person name="Creasy T."/>
            <person name="Davidsen T.M."/>
            <person name="Haft D.H."/>
            <person name="Zafar N."/>
            <person name="Zhou L."/>
            <person name="Halpin R."/>
            <person name="Holley T."/>
            <person name="Khouri H.M."/>
            <person name="Feldblyum T.V."/>
            <person name="White O."/>
            <person name="Fraser C.M."/>
            <person name="Chatterjee A.K."/>
            <person name="Cartinhour S."/>
            <person name="Schneider D."/>
            <person name="Mansfield J.W."/>
            <person name="Collmer A."/>
            <person name="Buell R."/>
        </authorList>
    </citation>
    <scope>NUCLEOTIDE SEQUENCE [LARGE SCALE GENOMIC DNA]</scope>
    <source>
        <strain>1448A / Race 6</strain>
    </source>
</reference>
<protein>
    <recommendedName>
        <fullName>Acyl-homoserine lactone acylase PvdQ</fullName>
        <shortName>AHL acylase PvdQ</shortName>
        <shortName>Acyl-HSL acylase PvdQ</shortName>
        <ecNumber>3.5.1.97</ecNumber>
    </recommendedName>
    <component>
        <recommendedName>
            <fullName>Acyl-homoserine lactone acylase PvdQ subunit alpha</fullName>
            <shortName>Acyl-HSL acylase PvdQ subunit alpha</shortName>
        </recommendedName>
    </component>
    <component>
        <recommendedName>
            <fullName>Acyl-homoserine lactone acylase PvdQ subunit beta</fullName>
            <shortName>Acyl-HSL acylase PvdQ subunit beta</shortName>
        </recommendedName>
    </component>
</protein>
<sequence length="779" mass="84927">MIISRPLCGFVFAGLSFAVILPAQALVAADNQAARAEIRRTGFGVPHIVAANERGLGYGIGYAYAQDNLCLLANEVVTVNGERSRYFGPDKATLEQRSNMASDLLFKWLNTPEALADFWKAQPPEIRQLMQGYVAGYNRSLDEQKTKGLPRPCAADWVRPISTDDLLRLTRRLLVEGGVGQFTEAFAGAKPPSAQKPLQVDSQQVQALQLAAVRNQRFALERGSNAVAVGHELSANGRGMLLANPHFPWGGGMRFYQMHLTIPGKLDVMGAALPGLPLINIGFNRHLAWSHTVDTSKHFTLHRLQLDPKDSTRYLLDGKSIAMGQQQVSVEVKQPDGSLKDVPRIIYSSKFGPVVQWPGKLDWDDKFAFSLRDANLENDRVLQQWYSMDKADSLKAFQDSLHKIQGIPWVNTLAVDAKGQALYMNLSVVPNVDAAKLAKCSDPRIGTELIVLDGSRSECNWDISAEAAQAGIYPSSRQPQLLRSDFVQHSNDSAWMVNPAAPLKGFSPLISQDGQPLGQRARFALDRLGSLQQAGKVSAENLQAMVMDNEVYQAGQVLPDLLKFCASELGDDVARLTPLCAALKAWDGRADLNSGIGFVYFQRIMTSMQGVASRWRVVFDPQNPIHTPSGLAIENPQVASALRAAMLAAVDEVAKAGLSPESKWGDIQVSSLSGKPIPIHGGPAGLGVYNAMQTIAGKDGKREVVSGTSYLQVVTFDEQGPRAQGLLAFSESSNPQSAHSSDQTEAFSKKQWSELPFTEQQIKADPAYQVQVISEEGSR</sequence>
<evidence type="ECO:0000250" key="1"/>
<evidence type="ECO:0000255" key="2"/>
<evidence type="ECO:0000256" key="3">
    <source>
        <dbReference type="SAM" id="MobiDB-lite"/>
    </source>
</evidence>
<evidence type="ECO:0000305" key="4"/>
<name>PVDQ_PSE14</name>
<accession>Q48KB0</accession>